<proteinExistence type="evidence at protein level"/>
<accession>Q9JK71</accession>
<gene>
    <name type="primary">Magi3</name>
    <name type="synonym">Slipr</name>
</gene>
<sequence length="1470" mass="160563">MSKTLKKKKHWLSKVQECAVSWAGPPGDLGAEIRGGAERGEFPYLGRLRDEPGGGGGTCCVVSGKAPSPGDVLLEVNGTPVSGLTNRDTLAVIRHFREPIRLKTVKPGKVINKDLRHYLSLQFQKGSIDHKLQQVIRDNLYLITIPCTTRAPRDGEVPGVDYNFISVEQFKALEESGALLESGTYDGNFYGTPKPPAEPSPFQPDPVDQVLFDNEFDTESQRKRTTSVSKMERMDSSLPEEEEDEDKEAVNGSGSMETREMHSESSDCWMKTVPSYNQTNRSMDFRNYMMRDENLEPLPKNWEMAYTDTGTIYFIDHNTKTTTWLDPRLCKKAKAPEDCEDGELPYGWEKIEDPQYGTYYVDHLNQKTQFENPVEEAKRKKQIGQAETHSAKTDVERAHFTRDPSQLKGVLVRASLKKSTMGFGFTIIGGDRPDEFLQVKNVLKDGPAAQDGKMAPGDVIVDINGNCVLGHTHADVVQMFQLVPVNQYVNLTLCRGYALPDDSEDPVVDIVAATPVINGQSLAKGEACMSTQDFKLGAMVLDQNGKSGKLLSSDRLNGPSDSNEQRASLASSGSSQPELVTIPLVKGPKGFGFAIADSPTGQKVKMILDSQWCQGLQKGDIIKEIYHQNVQNLTHLQVVEVLKQFPVGADVPLLILRGGPCSPTKTAKMKTDTKETSGSLETINEPTPQPMPFPPSIIRSGSPKLDPSEVYLKSKTLYEDKPPNTKDLDVFLRKQESGFGFRVLGGDGPDQSIYIGAIIPLGAAEKDGRLRAADELMCIDGIPVKGKSHKQVLDLMTTAARNGHVLLTVRRKIFYGEKQPEDESPQAFSQSGSPRLNRTELPTRSAPQESYDVILQRKENEGFGFVILTSKSKPPPGVIPHKIGRVIDGSPADRCGRLKVGDHISAVNGQSIVDLSHDNIVQLIKDAGVTVTLTVVAEEEHHGPPSGTNSARQSPALQHRPMGQAQATHIPGDRTALEGEVGKDVCSSYRHSWSDHKHLAQPDTAVISVVGSRHSQSLGCYPVELERGPRGFGFSLRGGKEYNMGLFILRLAEDGPAIKDGRIHVGDQIVEINGEPTQGITHTRAIELIQAGGNKVLLLLRPGTGLIPDHGDWDIYSPSSSNVIYDEQPPPLPSSHSAATFEESHVPVTEDSLIRVQTCEKAEELKDTVQEKKSTLNGSQPEMKYQSIQKNVSKKDPSRSHGHGDKNLLKGENGVTRRGRSASPKKSVNRHSEEHLEKIPRPLRSDPKGKSRDRSLSPRKGENKGQVTIKAGSGQDPCRKDRGRSSSPRKQQKIGGNSLSNTEGKLSEAGSRRAAGLSSDSPEQLPEGKEKSGVSRKDLKLSQLGKNRTRSPEKRSSKVDEASLPSKKTSDTASRVVSEKEKGRKPGTGERSRDKTGESVQTSAKPLTQEAGEKMALSKASEVTDRGKERAGGAPESSSPVKKAPITPGPWRVPRANKVTGTAGMADKQL</sequence>
<organism>
    <name type="scientific">Rattus norvegicus</name>
    <name type="common">Rat</name>
    <dbReference type="NCBI Taxonomy" id="10116"/>
    <lineage>
        <taxon>Eukaryota</taxon>
        <taxon>Metazoa</taxon>
        <taxon>Chordata</taxon>
        <taxon>Craniata</taxon>
        <taxon>Vertebrata</taxon>
        <taxon>Euteleostomi</taxon>
        <taxon>Mammalia</taxon>
        <taxon>Eutheria</taxon>
        <taxon>Euarchontoglires</taxon>
        <taxon>Glires</taxon>
        <taxon>Rodentia</taxon>
        <taxon>Myomorpha</taxon>
        <taxon>Muroidea</taxon>
        <taxon>Muridae</taxon>
        <taxon>Murinae</taxon>
        <taxon>Rattus</taxon>
    </lineage>
</organism>
<dbReference type="EMBL" id="AF255614">
    <property type="protein sequence ID" value="AAF66069.1"/>
    <property type="status" value="ALT_FRAME"/>
    <property type="molecule type" value="mRNA"/>
</dbReference>
<dbReference type="RefSeq" id="NP_620784.2">
    <property type="nucleotide sequence ID" value="NM_139084.2"/>
</dbReference>
<dbReference type="SMR" id="Q9JK71"/>
<dbReference type="BioGRID" id="251439">
    <property type="interactions" value="3"/>
</dbReference>
<dbReference type="FunCoup" id="Q9JK71">
    <property type="interactions" value="2201"/>
</dbReference>
<dbReference type="IntAct" id="Q9JK71">
    <property type="interactions" value="2"/>
</dbReference>
<dbReference type="STRING" id="10116.ENSRNOP00000026952"/>
<dbReference type="iPTMnet" id="Q9JK71"/>
<dbReference type="PhosphoSitePlus" id="Q9JK71"/>
<dbReference type="PaxDb" id="10116-ENSRNOP00000026952"/>
<dbReference type="GeneID" id="245903"/>
<dbReference type="KEGG" id="rno:245903"/>
<dbReference type="UCSC" id="RGD:621362">
    <property type="organism name" value="rat"/>
</dbReference>
<dbReference type="AGR" id="RGD:621362"/>
<dbReference type="CTD" id="260425"/>
<dbReference type="RGD" id="621362">
    <property type="gene designation" value="Magi3"/>
</dbReference>
<dbReference type="eggNOG" id="KOG0707">
    <property type="taxonomic scope" value="Eukaryota"/>
</dbReference>
<dbReference type="eggNOG" id="KOG3209">
    <property type="taxonomic scope" value="Eukaryota"/>
</dbReference>
<dbReference type="InParanoid" id="Q9JK71"/>
<dbReference type="PhylomeDB" id="Q9JK71"/>
<dbReference type="PRO" id="PR:Q9JK71"/>
<dbReference type="Proteomes" id="UP000002494">
    <property type="component" value="Unplaced"/>
</dbReference>
<dbReference type="GO" id="GO:0005923">
    <property type="term" value="C:bicellular tight junction"/>
    <property type="evidence" value="ECO:0007669"/>
    <property type="project" value="UniProtKB-SubCell"/>
</dbReference>
<dbReference type="GO" id="GO:0005911">
    <property type="term" value="C:cell-cell junction"/>
    <property type="evidence" value="ECO:0000266"/>
    <property type="project" value="RGD"/>
</dbReference>
<dbReference type="GO" id="GO:0005737">
    <property type="term" value="C:cytoplasm"/>
    <property type="evidence" value="ECO:0000318"/>
    <property type="project" value="GO_Central"/>
</dbReference>
<dbReference type="GO" id="GO:0005634">
    <property type="term" value="C:nucleus"/>
    <property type="evidence" value="ECO:0007669"/>
    <property type="project" value="UniProtKB-SubCell"/>
</dbReference>
<dbReference type="GO" id="GO:0005886">
    <property type="term" value="C:plasma membrane"/>
    <property type="evidence" value="ECO:0007669"/>
    <property type="project" value="UniProtKB-SubCell"/>
</dbReference>
<dbReference type="GO" id="GO:0005524">
    <property type="term" value="F:ATP binding"/>
    <property type="evidence" value="ECO:0007669"/>
    <property type="project" value="UniProtKB-KW"/>
</dbReference>
<dbReference type="GO" id="GO:0005109">
    <property type="term" value="F:frizzled binding"/>
    <property type="evidence" value="ECO:0000266"/>
    <property type="project" value="RGD"/>
</dbReference>
<dbReference type="GO" id="GO:0019903">
    <property type="term" value="F:protein phosphatase binding"/>
    <property type="evidence" value="ECO:0000353"/>
    <property type="project" value="RGD"/>
</dbReference>
<dbReference type="GO" id="GO:0007165">
    <property type="term" value="P:signal transduction"/>
    <property type="evidence" value="ECO:0000318"/>
    <property type="project" value="GO_Central"/>
</dbReference>
<dbReference type="CDD" id="cd06730">
    <property type="entry name" value="PDZ0_MAGI-1_3-like"/>
    <property type="match status" value="1"/>
</dbReference>
<dbReference type="CDD" id="cd06731">
    <property type="entry name" value="PDZ1_MAGI-1_3-like"/>
    <property type="match status" value="1"/>
</dbReference>
<dbReference type="CDD" id="cd06732">
    <property type="entry name" value="PDZ2_MAGI-1_3-like"/>
    <property type="match status" value="1"/>
</dbReference>
<dbReference type="CDD" id="cd06733">
    <property type="entry name" value="PDZ3_MAGI-1_3-like"/>
    <property type="match status" value="1"/>
</dbReference>
<dbReference type="CDD" id="cd06734">
    <property type="entry name" value="PDZ4_MAGI-1_3-like"/>
    <property type="match status" value="1"/>
</dbReference>
<dbReference type="CDD" id="cd06735">
    <property type="entry name" value="PDZ5_MAGI-1_3-like"/>
    <property type="match status" value="1"/>
</dbReference>
<dbReference type="CDD" id="cd00201">
    <property type="entry name" value="WW"/>
    <property type="match status" value="2"/>
</dbReference>
<dbReference type="FunFam" id="2.30.42.10:FF:000005">
    <property type="entry name" value="Membrane associated guanylate kinase, WW and PDZ domain containing 1"/>
    <property type="match status" value="1"/>
</dbReference>
<dbReference type="FunFam" id="2.30.42.10:FF:000006">
    <property type="entry name" value="Membrane associated guanylate kinase, WW and PDZ domain containing 1"/>
    <property type="match status" value="1"/>
</dbReference>
<dbReference type="FunFam" id="2.30.42.10:FF:000012">
    <property type="entry name" value="Membrane associated guanylate kinase, WW and PDZ domain containing 1"/>
    <property type="match status" value="1"/>
</dbReference>
<dbReference type="FunFam" id="2.20.70.10:FF:000001">
    <property type="entry name" value="Membrane-associated guanylate kinase, WW and PDZ domain-containing protein 1"/>
    <property type="match status" value="1"/>
</dbReference>
<dbReference type="FunFam" id="2.20.70.10:FF:000002">
    <property type="entry name" value="Membrane-associated guanylate kinase, WW and PDZ domain-containing protein 3 isoform 1"/>
    <property type="match status" value="1"/>
</dbReference>
<dbReference type="FunFam" id="2.30.42.10:FF:000042">
    <property type="entry name" value="Membrane-associated guanylate kinase, WW and PDZ domain-containing protein 3 isoform 1"/>
    <property type="match status" value="1"/>
</dbReference>
<dbReference type="FunFam" id="3.30.63.10:FF:000003">
    <property type="entry name" value="Membrane-associated guanylate kinase, WW and PDZ domain-containing protein 3 isoform 1"/>
    <property type="match status" value="1"/>
</dbReference>
<dbReference type="FunFam" id="2.30.42.10:FF:000131">
    <property type="entry name" value="membrane-associated guanylate kinase, WW and PDZ domain-containing protein 3 isoform X1"/>
    <property type="match status" value="1"/>
</dbReference>
<dbReference type="FunFam" id="2.30.42.10:FF:000148">
    <property type="entry name" value="membrane-associated guanylate kinase, WW and PDZ domain-containing protein 3 isoform X1"/>
    <property type="match status" value="1"/>
</dbReference>
<dbReference type="Gene3D" id="2.20.70.10">
    <property type="match status" value="2"/>
</dbReference>
<dbReference type="Gene3D" id="2.30.42.10">
    <property type="match status" value="6"/>
</dbReference>
<dbReference type="Gene3D" id="3.30.63.10">
    <property type="entry name" value="Guanylate Kinase phosphate binding domain"/>
    <property type="match status" value="1"/>
</dbReference>
<dbReference type="InterPro" id="IPR008145">
    <property type="entry name" value="GK/Ca_channel_bsu"/>
</dbReference>
<dbReference type="InterPro" id="IPR008144">
    <property type="entry name" value="Guanylate_kin-like_dom"/>
</dbReference>
<dbReference type="InterPro" id="IPR020590">
    <property type="entry name" value="Guanylate_kinase_CS"/>
</dbReference>
<dbReference type="InterPro" id="IPR027417">
    <property type="entry name" value="P-loop_NTPase"/>
</dbReference>
<dbReference type="InterPro" id="IPR001478">
    <property type="entry name" value="PDZ"/>
</dbReference>
<dbReference type="InterPro" id="IPR036034">
    <property type="entry name" value="PDZ_sf"/>
</dbReference>
<dbReference type="InterPro" id="IPR001202">
    <property type="entry name" value="WW_dom"/>
</dbReference>
<dbReference type="InterPro" id="IPR036020">
    <property type="entry name" value="WW_dom_sf"/>
</dbReference>
<dbReference type="PANTHER" id="PTHR10316">
    <property type="entry name" value="MEMBRANE ASSOCIATED GUANYLATE KINASE-RELATED"/>
    <property type="match status" value="1"/>
</dbReference>
<dbReference type="PANTHER" id="PTHR10316:SF10">
    <property type="entry name" value="MEMBRANE-ASSOCIATED GUANYLATE KINASE, WW AND PDZ DOMAIN-CONTAINING PROTEIN 3"/>
    <property type="match status" value="1"/>
</dbReference>
<dbReference type="Pfam" id="PF00625">
    <property type="entry name" value="Guanylate_kin"/>
    <property type="match status" value="1"/>
</dbReference>
<dbReference type="Pfam" id="PF00595">
    <property type="entry name" value="PDZ"/>
    <property type="match status" value="4"/>
</dbReference>
<dbReference type="Pfam" id="PF00397">
    <property type="entry name" value="WW"/>
    <property type="match status" value="2"/>
</dbReference>
<dbReference type="SMART" id="SM00072">
    <property type="entry name" value="GuKc"/>
    <property type="match status" value="1"/>
</dbReference>
<dbReference type="SMART" id="SM00228">
    <property type="entry name" value="PDZ"/>
    <property type="match status" value="6"/>
</dbReference>
<dbReference type="SMART" id="SM00456">
    <property type="entry name" value="WW"/>
    <property type="match status" value="2"/>
</dbReference>
<dbReference type="SUPFAM" id="SSF52540">
    <property type="entry name" value="P-loop containing nucleoside triphosphate hydrolases"/>
    <property type="match status" value="1"/>
</dbReference>
<dbReference type="SUPFAM" id="SSF50156">
    <property type="entry name" value="PDZ domain-like"/>
    <property type="match status" value="6"/>
</dbReference>
<dbReference type="SUPFAM" id="SSF51045">
    <property type="entry name" value="WW domain"/>
    <property type="match status" value="2"/>
</dbReference>
<dbReference type="PROSITE" id="PS00856">
    <property type="entry name" value="GUANYLATE_KINASE_1"/>
    <property type="match status" value="1"/>
</dbReference>
<dbReference type="PROSITE" id="PS50052">
    <property type="entry name" value="GUANYLATE_KINASE_2"/>
    <property type="match status" value="1"/>
</dbReference>
<dbReference type="PROSITE" id="PS50106">
    <property type="entry name" value="PDZ"/>
    <property type="match status" value="6"/>
</dbReference>
<dbReference type="PROSITE" id="PS01159">
    <property type="entry name" value="WW_DOMAIN_1"/>
    <property type="match status" value="2"/>
</dbReference>
<dbReference type="PROSITE" id="PS50020">
    <property type="entry name" value="WW_DOMAIN_2"/>
    <property type="match status" value="2"/>
</dbReference>
<name>MAGI3_RAT</name>
<protein>
    <recommendedName>
        <fullName>Membrane-associated guanylate kinase, WW and PDZ domain-containing protein 3</fullName>
    </recommendedName>
    <alternativeName>
        <fullName>Membrane-associated guanylate kinase inverted 3</fullName>
        <shortName>MAGI-3</shortName>
    </alternativeName>
    <alternativeName>
        <fullName>Scaffolding-like protein</fullName>
    </alternativeName>
</protein>
<feature type="chain" id="PRO_0000341409" description="Membrane-associated guanylate kinase, WW and PDZ domain-containing protein 3">
    <location>
        <begin position="1"/>
        <end position="1470"/>
    </location>
</feature>
<feature type="domain" description="PDZ 1" evidence="5">
    <location>
        <begin position="18"/>
        <end position="108"/>
    </location>
</feature>
<feature type="domain" description="Guanylate kinase-like" evidence="4">
    <location>
        <begin position="116"/>
        <end position="290"/>
    </location>
</feature>
<feature type="domain" description="WW 1" evidence="6">
    <location>
        <begin position="296"/>
        <end position="329"/>
    </location>
</feature>
<feature type="domain" description="WW 2" evidence="6">
    <location>
        <begin position="342"/>
        <end position="375"/>
    </location>
</feature>
<feature type="domain" description="PDZ 2" evidence="5">
    <location>
        <begin position="413"/>
        <end position="495"/>
    </location>
</feature>
<feature type="domain" description="PDZ 3" evidence="5">
    <location>
        <begin position="581"/>
        <end position="657"/>
    </location>
</feature>
<feature type="domain" description="PDZ 4" evidence="5">
    <location>
        <begin position="729"/>
        <end position="811"/>
    </location>
</feature>
<feature type="domain" description="PDZ 5" evidence="5">
    <location>
        <begin position="852"/>
        <end position="939"/>
    </location>
</feature>
<feature type="domain" description="PDZ 6" evidence="5">
    <location>
        <begin position="1022"/>
        <end position="1104"/>
    </location>
</feature>
<feature type="region of interest" description="Interaction with ADRB1 and TGFA" evidence="10">
    <location>
        <begin position="18"/>
        <end position="108"/>
    </location>
</feature>
<feature type="region of interest" description="Disordered" evidence="7">
    <location>
        <begin position="184"/>
        <end position="266"/>
    </location>
</feature>
<feature type="region of interest" description="Interaction with PTEN" evidence="1">
    <location>
        <begin position="413"/>
        <end position="495"/>
    </location>
</feature>
<feature type="region of interest" description="Disordered" evidence="7">
    <location>
        <begin position="550"/>
        <end position="575"/>
    </location>
</feature>
<feature type="region of interest" description="Disordered" evidence="7">
    <location>
        <begin position="665"/>
        <end position="700"/>
    </location>
</feature>
<feature type="region of interest" description="Interaction with ADGRB1" evidence="1">
    <location>
        <begin position="729"/>
        <end position="811"/>
    </location>
</feature>
<feature type="region of interest" description="Disordered" evidence="7">
    <location>
        <begin position="818"/>
        <end position="847"/>
    </location>
</feature>
<feature type="region of interest" description="Interaction with LPAR2 and GRIN2B" evidence="1">
    <location>
        <begin position="852"/>
        <end position="939"/>
    </location>
</feature>
<feature type="region of interest" description="Disordered" evidence="7">
    <location>
        <begin position="939"/>
        <end position="976"/>
    </location>
</feature>
<feature type="region of interest" description="Disordered" evidence="7">
    <location>
        <begin position="1124"/>
        <end position="1146"/>
    </location>
</feature>
<feature type="region of interest" description="Disordered" evidence="7">
    <location>
        <begin position="1167"/>
        <end position="1470"/>
    </location>
</feature>
<feature type="compositionally biased region" description="Pro residues" evidence="7">
    <location>
        <begin position="193"/>
        <end position="204"/>
    </location>
</feature>
<feature type="compositionally biased region" description="Acidic residues" evidence="7">
    <location>
        <begin position="238"/>
        <end position="247"/>
    </location>
</feature>
<feature type="compositionally biased region" description="Polar residues" evidence="7">
    <location>
        <begin position="559"/>
        <end position="575"/>
    </location>
</feature>
<feature type="compositionally biased region" description="Polar residues" evidence="7">
    <location>
        <begin position="676"/>
        <end position="686"/>
    </location>
</feature>
<feature type="compositionally biased region" description="Polar residues" evidence="7">
    <location>
        <begin position="826"/>
        <end position="847"/>
    </location>
</feature>
<feature type="compositionally biased region" description="Polar residues" evidence="7">
    <location>
        <begin position="946"/>
        <end position="956"/>
    </location>
</feature>
<feature type="compositionally biased region" description="Polar residues" evidence="7">
    <location>
        <begin position="1175"/>
        <end position="1191"/>
    </location>
</feature>
<feature type="compositionally biased region" description="Basic and acidic residues" evidence="7">
    <location>
        <begin position="1193"/>
        <end position="1209"/>
    </location>
</feature>
<feature type="compositionally biased region" description="Basic and acidic residues" evidence="7">
    <location>
        <begin position="1230"/>
        <end position="1263"/>
    </location>
</feature>
<feature type="compositionally biased region" description="Polar residues" evidence="7">
    <location>
        <begin position="1285"/>
        <end position="1304"/>
    </location>
</feature>
<feature type="compositionally biased region" description="Basic and acidic residues" evidence="7">
    <location>
        <begin position="1326"/>
        <end position="1340"/>
    </location>
</feature>
<feature type="compositionally biased region" description="Basic and acidic residues" evidence="7">
    <location>
        <begin position="1350"/>
        <end position="1361"/>
    </location>
</feature>
<feature type="compositionally biased region" description="Basic and acidic residues" evidence="7">
    <location>
        <begin position="1377"/>
        <end position="1397"/>
    </location>
</feature>
<feature type="compositionally biased region" description="Basic and acidic residues" evidence="7">
    <location>
        <begin position="1422"/>
        <end position="1431"/>
    </location>
</feature>
<feature type="binding site" evidence="4">
    <location>
        <begin position="123"/>
        <end position="130"/>
    </location>
    <ligand>
        <name>ATP</name>
        <dbReference type="ChEBI" id="CHEBI:30616"/>
    </ligand>
</feature>
<feature type="modified residue" description="Phosphoserine" evidence="3">
    <location>
        <position position="236"/>
    </location>
</feature>
<feature type="modified residue" description="Phosphoserine" evidence="2">
    <location>
        <position position="598"/>
    </location>
</feature>
<feature type="modified residue" description="Phosphoserine" evidence="12">
    <location>
        <position position="702"/>
    </location>
</feature>
<feature type="modified residue" description="Phosphoserine" evidence="12">
    <location>
        <position position="833"/>
    </location>
</feature>
<feature type="modified residue" description="Phosphoserine" evidence="3">
    <location>
        <position position="916"/>
    </location>
</feature>
<feature type="modified residue" description="Phosphoserine" evidence="12">
    <location>
        <position position="1321"/>
    </location>
</feature>
<keyword id="KW-0067">ATP-binding</keyword>
<keyword id="KW-0965">Cell junction</keyword>
<keyword id="KW-1003">Cell membrane</keyword>
<keyword id="KW-0472">Membrane</keyword>
<keyword id="KW-0547">Nucleotide-binding</keyword>
<keyword id="KW-0539">Nucleus</keyword>
<keyword id="KW-0597">Phosphoprotein</keyword>
<keyword id="KW-1185">Reference proteome</keyword>
<keyword id="KW-0677">Repeat</keyword>
<keyword id="KW-0796">Tight junction</keyword>
<evidence type="ECO:0000250" key="1"/>
<evidence type="ECO:0000250" key="2">
    <source>
        <dbReference type="UniProtKB" id="Q5TCQ9"/>
    </source>
</evidence>
<evidence type="ECO:0000250" key="3">
    <source>
        <dbReference type="UniProtKB" id="Q9EQJ9"/>
    </source>
</evidence>
<evidence type="ECO:0000255" key="4">
    <source>
        <dbReference type="PROSITE-ProRule" id="PRU00100"/>
    </source>
</evidence>
<evidence type="ECO:0000255" key="5">
    <source>
        <dbReference type="PROSITE-ProRule" id="PRU00143"/>
    </source>
</evidence>
<evidence type="ECO:0000255" key="6">
    <source>
        <dbReference type="PROSITE-ProRule" id="PRU00224"/>
    </source>
</evidence>
<evidence type="ECO:0000256" key="7">
    <source>
        <dbReference type="SAM" id="MobiDB-lite"/>
    </source>
</evidence>
<evidence type="ECO:0000269" key="8">
    <source>
    </source>
</evidence>
<evidence type="ECO:0000269" key="9">
    <source>
    </source>
</evidence>
<evidence type="ECO:0000269" key="10">
    <source>
    </source>
</evidence>
<evidence type="ECO:0000305" key="11"/>
<evidence type="ECO:0007744" key="12">
    <source>
    </source>
</evidence>
<comment type="function">
    <text evidence="8">Acts as a scaffolding protein at cell-cell junctions, thereby regulating various cellular and signaling processes. Cooperates with PTEN to modulate the kinase activity of AKT1. Its interaction with PTPRB and tyrosine phosphorylated proteins suggests that it may link receptor tyrosine phosphatase with its substrates at the plasma membrane. In polarized epithelial cells, involved in efficient trafficking of TGFA to the cell surface. Regulates the ability of LPAR2 to activate ERK and RhoA pathways. Regulates the JNK signaling cascade via its interaction with FZD4 and VANGL2.</text>
</comment>
<comment type="subunit">
    <text evidence="2 3 8 9 10">Interacts with ADRB1, ADGRB1, LPAR2/EDG4, FZD4, FZD7, GRIN2B, TGFA and VANGL2 (By similarity). Interacts with PTEN. Interacts with ADRB1, PTPRB and unidentified tyrosine phosphorylated proteins. Interacts with DLL1 (By similarity). Interacts with PRRG4 (via cytoplasmic domain) (By similarity).</text>
</comment>
<comment type="interaction">
    <interactant intactId="EBI-696226">
        <id>Q9JK71</id>
    </interactant>
    <interactant intactId="EBI-991303">
        <id>P18090</id>
        <label>Adrb1</label>
    </interactant>
    <organismsDiffer>false</organismsDiffer>
    <experiments>3</experiments>
</comment>
<comment type="interaction">
    <interactant intactId="EBI-696226">
        <id>Q9JK71</id>
    </interactant>
    <interactant intactId="EBI-696162">
        <id>P60484</id>
        <label>PTEN</label>
    </interactant>
    <organismsDiffer>true</organismsDiffer>
    <experiments>3</experiments>
</comment>
<comment type="subcellular location">
    <subcellularLocation>
        <location>Cell membrane</location>
        <topology>Peripheral membrane protein</topology>
    </subcellularLocation>
    <subcellularLocation>
        <location>Cell junction</location>
        <location>Tight junction</location>
    </subcellularLocation>
    <subcellularLocation>
        <location>Nucleus</location>
    </subcellularLocation>
    <text>Concentrates in specific sites at the plasma membrane and in the nucleus. In epithelial cells, it localizes at tight junctions.</text>
</comment>
<comment type="similarity">
    <text evidence="11">Belongs to the MAGUK family.</text>
</comment>
<comment type="sequence caution" evidence="11">
    <conflict type="frameshift">
        <sequence resource="EMBL-CDS" id="AAF66069"/>
    </conflict>
</comment>
<reference key="1">
    <citation type="journal article" date="2003" name="J. Cell Sci.">
        <title>Junctional protein MAGI-3 interacts with receptor tyrosine phosphatase beta (RPTP beta) and tyrosine-phosphorylated proteins.</title>
        <authorList>
            <person name="Adamsky K."/>
            <person name="Arnold K."/>
            <person name="Sabanay H."/>
            <person name="Peles E."/>
        </authorList>
    </citation>
    <scope>NUCLEOTIDE SEQUENCE [MRNA]</scope>
    <scope>FUNCTION</scope>
    <scope>SUBCELLULAR LOCATION</scope>
    <scope>INTERACTION WITH PTPRB</scope>
</reference>
<reference key="2">
    <citation type="journal article" date="2005" name="J. Biol. Chem.">
        <title>Binding of PTEN to specific PDZ domains contributes to PTEN protein stability and phosphorylation by microtubule-associated serine/threonine kinases.</title>
        <authorList>
            <person name="Valiente M."/>
            <person name="Andres-Pons A."/>
            <person name="Gomar B."/>
            <person name="Torres J."/>
            <person name="Gil A."/>
            <person name="Tapparel C."/>
            <person name="Antonarakis S.E."/>
            <person name="Pulido R."/>
        </authorList>
    </citation>
    <scope>INTERACTION WITH PTEN</scope>
</reference>
<reference key="3">
    <citation type="journal article" date="2006" name="J. Biol. Chem.">
        <title>Proteomic analysis of beta1-adrenergic receptor interactions with PDZ scaffold proteins.</title>
        <authorList>
            <person name="He J."/>
            <person name="Bellini M."/>
            <person name="Inuzuka H."/>
            <person name="Xu J."/>
            <person name="Xiong Y."/>
            <person name="Yang X."/>
            <person name="Castleberry A.M."/>
            <person name="Hall R.A."/>
        </authorList>
    </citation>
    <scope>SUBCELLULAR LOCATION</scope>
    <scope>INTERACTION WITH ADRB1</scope>
</reference>
<reference key="4">
    <citation type="journal article" date="2012" name="Nat. Commun.">
        <title>Quantitative maps of protein phosphorylation sites across 14 different rat organs and tissues.</title>
        <authorList>
            <person name="Lundby A."/>
            <person name="Secher A."/>
            <person name="Lage K."/>
            <person name="Nordsborg N.B."/>
            <person name="Dmytriyev A."/>
            <person name="Lundby C."/>
            <person name="Olsen J.V."/>
        </authorList>
    </citation>
    <scope>PHOSPHORYLATION [LARGE SCALE ANALYSIS] AT SER-702; SER-833 AND SER-1321</scope>
    <scope>IDENTIFICATION BY MASS SPECTROMETRY [LARGE SCALE ANALYSIS]</scope>
</reference>